<comment type="function">
    <text evidence="2">Acts as a GEF (guanine nucleotide exchange factor) for the Rho family of small GTP-binding proteins (G proteins) that stimulates the dissociation of GDP to enable subsequent binding of GTP. Additionally, appears to chaperone the processing and/or trafficking of small GTPases containing a C-terminal polybasic region independently of GEF activity. Targets include RAP1A/RAP1B, RHOA, RHOB, RHOC, RAC1 and KRAS. Regulates mitochondrial dynamics by controlling RHOT function to promote mitochondrial fission during high calcium conditions. Able to promote the Ca(2+) release from the endoplasmic reticulum via both inositol trisphosphate (Ins3P) and ryanodine sensitive receptors leading to a enhanced mitochondrial Ca(2+) uptake.</text>
</comment>
<comment type="function">
    <molecule>Isoform 1</molecule>
    <text evidence="2">Acts as a GEF (guanine nucleotide exchange factor) for unprenylated RHOA. Chaperones the entry and passage of small GTPases through the prenylation pathway. Recognizes the last amino acid in the GTPase C-terminal CAAX motif with a preference for 'Leu' over 'Met', indicating involvement in the geranylgeranylation pathway. May also recognize prenylated GTPases.</text>
</comment>
<comment type="function">
    <molecule>Isoform 3</molecule>
    <text evidence="2">Acts as a GEF (guanine nucleotide exchange factor) for prenylated RHOA. Acts as a GEF for RHOC. Chaperones the downstream trafficking and/or processing of small newly prenylated GTPases. Escorts RAC1 to the nucleus.</text>
</comment>
<comment type="subunit">
    <text evidence="2">Interacts with RABL3. Interacts with RHOT1.</text>
</comment>
<comment type="subunit">
    <molecule>Isoform 1</molecule>
    <text evidence="2">Interacts with unprenylated RHOA; the interaction is direct. Interacts with RAP1A. Interacts with KRAS. Interacts with RAC1. Interacts with RAP1B. Preferentially interacts with unprenylated GTPases that will become geranylgeranylated. May also interact with prenylated GTPases.</text>
</comment>
<comment type="subunit">
    <molecule>Isoform 3</molecule>
    <text evidence="2">Interacts with prenylated RHOA; the interaction is direct and in a 1:1 stoichiometry. Interacts with RAP1A. Interacts with KRAS. Interacts with RAC1. Interacts with RAP1B. Preferentially interacts with prenylated GTPases.</text>
</comment>
<comment type="subcellular location">
    <subcellularLocation>
        <location evidence="2">Cytoplasm</location>
        <location evidence="2">Cytosol</location>
    </subcellularLocation>
    <subcellularLocation>
        <location evidence="2">Endoplasmic reticulum</location>
    </subcellularLocation>
    <subcellularLocation>
        <location evidence="2">Mitochondrion</location>
    </subcellularLocation>
    <subcellularLocation>
        <location evidence="2">Nucleus</location>
    </subcellularLocation>
    <text evidence="2">Nuclear import is dependent on complexing with a GTPase containing a C-terminal polybasic region.</text>
</comment>
<comment type="alternative products">
    <event type="alternative splicing"/>
    <isoform>
        <id>E9Q912-1</id>
        <name>1</name>
        <sequence type="displayed"/>
    </isoform>
    <isoform>
        <id>E9Q912-2</id>
        <name>2</name>
        <sequence type="described" ref="VSP_061009"/>
    </isoform>
    <isoform>
        <id>E9Q912-3</id>
        <name>3</name>
        <sequence type="described" ref="VSP_061008"/>
    </isoform>
</comment>
<comment type="PTM">
    <text evidence="1">Serotonylated on Gln residues by TGM2 in response to hypoxia, leading to its inactivation.</text>
</comment>
<proteinExistence type="evidence at transcript level"/>
<gene>
    <name evidence="6" type="primary">Rap1gds1</name>
</gene>
<name>GDS1_MOUSE</name>
<sequence>MDNLSDTLKKLKITAADRTEGSLEGCLDCLLQALAQNNAETSEKIQGSGILQLFANLLTPQASCTAKVADIIAEVAKNEFMRIPCVDAGLISPLVQLLNSKDQEVLLQTGRALGNICYDSHEGRSAVDQAGGAQIVIDHLRSLCGRTDPASEKLMTVFCGMLMNYSNENDSLQAQLISMGVIPTLVKLLGIHCHNAALTEMCLVAFGNLAELESSKEQFASTNIAEELVKLFKKQIEHDKREMIFEVLAPLAENDAIKLQLVEAGLVECLLEIVQQKVDSNKEDDVAELKTASDLMVLLLLGDESMQKLFEGGKGSVFQRVLSWIPSNNHQLQLAGALAIANFARNDGNCIHMVDNGIVEKLMDLLDRHVEDGNVTVQHAALSALRNLAIPVVNKAKMLSAGVTETVLKFLKSEMPPVQFKLLGTLRMLIDAQAEAAEQLGKNAKLVERLVEWCEAKDHAGVMGESNRLLSALIRHSKSKDVIKTIVQSGGIKHLVTMATSEHVIMQNEALVALALIAALELGPAEKDLASAQLVQILHRLLADERSAPEIKYNSMVLICALMGSESLYKEVQDLAFLDVVSKLRSHENKSVAQQASLTEQRLTVES</sequence>
<accession>E9Q912</accession>
<accession>E9Q6Q4</accession>
<accession>I6L967</accession>
<accession>Q3TA69</accession>
<accession>Q3TLU4</accession>
<accession>Q3TPS9</accession>
<accession>Q3TU36</accession>
<keyword id="KW-0007">Acetylation</keyword>
<keyword id="KW-0025">Alternative splicing</keyword>
<keyword id="KW-0963">Cytoplasm</keyword>
<keyword id="KW-0256">Endoplasmic reticulum</keyword>
<keyword id="KW-0344">Guanine-nucleotide releasing factor</keyword>
<keyword id="KW-0496">Mitochondrion</keyword>
<keyword id="KW-0539">Nucleus</keyword>
<keyword id="KW-1185">Reference proteome</keyword>
<keyword id="KW-0677">Repeat</keyword>
<feature type="chain" id="PRO_0000452472" description="Rap1 GTPase-GDP dissociation stimulator 1">
    <location>
        <begin position="1"/>
        <end position="607"/>
    </location>
</feature>
<feature type="repeat" description="ARM 1" evidence="4">
    <location>
        <begin position="89"/>
        <end position="131"/>
    </location>
</feature>
<feature type="repeat" description="ARM 2" evidence="3">
    <location>
        <begin position="170"/>
        <end position="211"/>
    </location>
</feature>
<feature type="repeat" description="ARM 3" evidence="3">
    <location>
        <begin position="347"/>
        <end position="390"/>
    </location>
</feature>
<feature type="repeat" description="ARM 4" evidence="3">
    <location>
        <begin position="391"/>
        <end position="431"/>
    </location>
</feature>
<feature type="repeat" description="ARM 5" evidence="3">
    <location>
        <begin position="479"/>
        <end position="519"/>
    </location>
</feature>
<feature type="region of interest" description="Prevents binding to prenylated RHOA" evidence="2">
    <location>
        <begin position="122"/>
        <end position="170"/>
    </location>
</feature>
<feature type="modified residue" description="N6-acetyllysine" evidence="2">
    <location>
        <position position="230"/>
    </location>
</feature>
<feature type="splice variant" id="VSP_061008" description="In isoform 3.">
    <location>
        <begin position="122"/>
        <end position="170"/>
    </location>
</feature>
<feature type="splice variant" id="VSP_061009" description="In isoform 2.">
    <location>
        <position position="434"/>
    </location>
</feature>
<feature type="sequence conflict" description="In Ref. 1; BAE38698 and 3; AAH11279." evidence="5" ref="1 3">
    <original>D</original>
    <variation>N</variation>
    <location>
        <position position="70"/>
    </location>
</feature>
<feature type="sequence conflict" description="In Ref. 1; BAE38698." evidence="5" ref="1">
    <original>K</original>
    <variation>R</variation>
    <location>
        <position position="187"/>
    </location>
</feature>
<feature type="sequence conflict" description="In Ref. 1; BAE38698 and 3; AAH11279." evidence="5" ref="1 3">
    <original>N</original>
    <variation>H</variation>
    <location>
        <position position="254"/>
    </location>
</feature>
<feature type="sequence conflict" description="In Ref. 1; BAE42801." evidence="5" ref="1">
    <original>D</original>
    <variation>N</variation>
    <location>
        <position position="279"/>
    </location>
</feature>
<feature type="sequence conflict" description="In Ref. 1; BAE37656." evidence="5" ref="1">
    <original>V</original>
    <variation>I</variation>
    <location>
        <position position="393"/>
    </location>
</feature>
<evidence type="ECO:0000250" key="1">
    <source>
        <dbReference type="UniProtKB" id="O55143"/>
    </source>
</evidence>
<evidence type="ECO:0000250" key="2">
    <source>
        <dbReference type="UniProtKB" id="P52306"/>
    </source>
</evidence>
<evidence type="ECO:0000255" key="3"/>
<evidence type="ECO:0000255" key="4">
    <source>
        <dbReference type="PROSITE-ProRule" id="PRU00259"/>
    </source>
</evidence>
<evidence type="ECO:0000305" key="5"/>
<evidence type="ECO:0000312" key="6">
    <source>
        <dbReference type="MGI" id="MGI:2385189"/>
    </source>
</evidence>
<reference key="1">
    <citation type="journal article" date="2005" name="Science">
        <title>The transcriptional landscape of the mammalian genome.</title>
        <authorList>
            <person name="Carninci P."/>
            <person name="Kasukawa T."/>
            <person name="Katayama S."/>
            <person name="Gough J."/>
            <person name="Frith M.C."/>
            <person name="Maeda N."/>
            <person name="Oyama R."/>
            <person name="Ravasi T."/>
            <person name="Lenhard B."/>
            <person name="Wells C."/>
            <person name="Kodzius R."/>
            <person name="Shimokawa K."/>
            <person name="Bajic V.B."/>
            <person name="Brenner S.E."/>
            <person name="Batalov S."/>
            <person name="Forrest A.R."/>
            <person name="Zavolan M."/>
            <person name="Davis M.J."/>
            <person name="Wilming L.G."/>
            <person name="Aidinis V."/>
            <person name="Allen J.E."/>
            <person name="Ambesi-Impiombato A."/>
            <person name="Apweiler R."/>
            <person name="Aturaliya R.N."/>
            <person name="Bailey T.L."/>
            <person name="Bansal M."/>
            <person name="Baxter L."/>
            <person name="Beisel K.W."/>
            <person name="Bersano T."/>
            <person name="Bono H."/>
            <person name="Chalk A.M."/>
            <person name="Chiu K.P."/>
            <person name="Choudhary V."/>
            <person name="Christoffels A."/>
            <person name="Clutterbuck D.R."/>
            <person name="Crowe M.L."/>
            <person name="Dalla E."/>
            <person name="Dalrymple B.P."/>
            <person name="de Bono B."/>
            <person name="Della Gatta G."/>
            <person name="di Bernardo D."/>
            <person name="Down T."/>
            <person name="Engstrom P."/>
            <person name="Fagiolini M."/>
            <person name="Faulkner G."/>
            <person name="Fletcher C.F."/>
            <person name="Fukushima T."/>
            <person name="Furuno M."/>
            <person name="Futaki S."/>
            <person name="Gariboldi M."/>
            <person name="Georgii-Hemming P."/>
            <person name="Gingeras T.R."/>
            <person name="Gojobori T."/>
            <person name="Green R.E."/>
            <person name="Gustincich S."/>
            <person name="Harbers M."/>
            <person name="Hayashi Y."/>
            <person name="Hensch T.K."/>
            <person name="Hirokawa N."/>
            <person name="Hill D."/>
            <person name="Huminiecki L."/>
            <person name="Iacono M."/>
            <person name="Ikeo K."/>
            <person name="Iwama A."/>
            <person name="Ishikawa T."/>
            <person name="Jakt M."/>
            <person name="Kanapin A."/>
            <person name="Katoh M."/>
            <person name="Kawasawa Y."/>
            <person name="Kelso J."/>
            <person name="Kitamura H."/>
            <person name="Kitano H."/>
            <person name="Kollias G."/>
            <person name="Krishnan S.P."/>
            <person name="Kruger A."/>
            <person name="Kummerfeld S.K."/>
            <person name="Kurochkin I.V."/>
            <person name="Lareau L.F."/>
            <person name="Lazarevic D."/>
            <person name="Lipovich L."/>
            <person name="Liu J."/>
            <person name="Liuni S."/>
            <person name="McWilliam S."/>
            <person name="Madan Babu M."/>
            <person name="Madera M."/>
            <person name="Marchionni L."/>
            <person name="Matsuda H."/>
            <person name="Matsuzawa S."/>
            <person name="Miki H."/>
            <person name="Mignone F."/>
            <person name="Miyake S."/>
            <person name="Morris K."/>
            <person name="Mottagui-Tabar S."/>
            <person name="Mulder N."/>
            <person name="Nakano N."/>
            <person name="Nakauchi H."/>
            <person name="Ng P."/>
            <person name="Nilsson R."/>
            <person name="Nishiguchi S."/>
            <person name="Nishikawa S."/>
            <person name="Nori F."/>
            <person name="Ohara O."/>
            <person name="Okazaki Y."/>
            <person name="Orlando V."/>
            <person name="Pang K.C."/>
            <person name="Pavan W.J."/>
            <person name="Pavesi G."/>
            <person name="Pesole G."/>
            <person name="Petrovsky N."/>
            <person name="Piazza S."/>
            <person name="Reed J."/>
            <person name="Reid J.F."/>
            <person name="Ring B.Z."/>
            <person name="Ringwald M."/>
            <person name="Rost B."/>
            <person name="Ruan Y."/>
            <person name="Salzberg S.L."/>
            <person name="Sandelin A."/>
            <person name="Schneider C."/>
            <person name="Schoenbach C."/>
            <person name="Sekiguchi K."/>
            <person name="Semple C.A."/>
            <person name="Seno S."/>
            <person name="Sessa L."/>
            <person name="Sheng Y."/>
            <person name="Shibata Y."/>
            <person name="Shimada H."/>
            <person name="Shimada K."/>
            <person name="Silva D."/>
            <person name="Sinclair B."/>
            <person name="Sperling S."/>
            <person name="Stupka E."/>
            <person name="Sugiura K."/>
            <person name="Sultana R."/>
            <person name="Takenaka Y."/>
            <person name="Taki K."/>
            <person name="Tammoja K."/>
            <person name="Tan S.L."/>
            <person name="Tang S."/>
            <person name="Taylor M.S."/>
            <person name="Tegner J."/>
            <person name="Teichmann S.A."/>
            <person name="Ueda H.R."/>
            <person name="van Nimwegen E."/>
            <person name="Verardo R."/>
            <person name="Wei C.L."/>
            <person name="Yagi K."/>
            <person name="Yamanishi H."/>
            <person name="Zabarovsky E."/>
            <person name="Zhu S."/>
            <person name="Zimmer A."/>
            <person name="Hide W."/>
            <person name="Bult C."/>
            <person name="Grimmond S.M."/>
            <person name="Teasdale R.D."/>
            <person name="Liu E.T."/>
            <person name="Brusic V."/>
            <person name="Quackenbush J."/>
            <person name="Wahlestedt C."/>
            <person name="Mattick J.S."/>
            <person name="Hume D.A."/>
            <person name="Kai C."/>
            <person name="Sasaki D."/>
            <person name="Tomaru Y."/>
            <person name="Fukuda S."/>
            <person name="Kanamori-Katayama M."/>
            <person name="Suzuki M."/>
            <person name="Aoki J."/>
            <person name="Arakawa T."/>
            <person name="Iida J."/>
            <person name="Imamura K."/>
            <person name="Itoh M."/>
            <person name="Kato T."/>
            <person name="Kawaji H."/>
            <person name="Kawagashira N."/>
            <person name="Kawashima T."/>
            <person name="Kojima M."/>
            <person name="Kondo S."/>
            <person name="Konno H."/>
            <person name="Nakano K."/>
            <person name="Ninomiya N."/>
            <person name="Nishio T."/>
            <person name="Okada M."/>
            <person name="Plessy C."/>
            <person name="Shibata K."/>
            <person name="Shiraki T."/>
            <person name="Suzuki S."/>
            <person name="Tagami M."/>
            <person name="Waki K."/>
            <person name="Watahiki A."/>
            <person name="Okamura-Oho Y."/>
            <person name="Suzuki H."/>
            <person name="Kawai J."/>
            <person name="Hayashizaki Y."/>
        </authorList>
    </citation>
    <scope>NUCLEOTIDE SEQUENCE [LARGE SCALE MRNA] (ISOFORMS 1 AND 2)</scope>
    <source>
        <strain>C57BL/6J</strain>
        <strain>NOD</strain>
        <tissue>Head</tissue>
        <tissue>Hippocampus</tissue>
        <tissue>Mammary gland</tissue>
        <tissue>Spleen</tissue>
    </source>
</reference>
<reference key="2">
    <citation type="journal article" date="2009" name="PLoS Biol.">
        <title>Lineage-specific biology revealed by a finished genome assembly of the mouse.</title>
        <authorList>
            <person name="Church D.M."/>
            <person name="Goodstadt L."/>
            <person name="Hillier L.W."/>
            <person name="Zody M.C."/>
            <person name="Goldstein S."/>
            <person name="She X."/>
            <person name="Bult C.J."/>
            <person name="Agarwala R."/>
            <person name="Cherry J.L."/>
            <person name="DiCuccio M."/>
            <person name="Hlavina W."/>
            <person name="Kapustin Y."/>
            <person name="Meric P."/>
            <person name="Maglott D."/>
            <person name="Birtle Z."/>
            <person name="Marques A.C."/>
            <person name="Graves T."/>
            <person name="Zhou S."/>
            <person name="Teague B."/>
            <person name="Potamousis K."/>
            <person name="Churas C."/>
            <person name="Place M."/>
            <person name="Herschleb J."/>
            <person name="Runnheim R."/>
            <person name="Forrest D."/>
            <person name="Amos-Landgraf J."/>
            <person name="Schwartz D.C."/>
            <person name="Cheng Z."/>
            <person name="Lindblad-Toh K."/>
            <person name="Eichler E.E."/>
            <person name="Ponting C.P."/>
        </authorList>
    </citation>
    <scope>NUCLEOTIDE SEQUENCE [LARGE SCALE GENOMIC DNA]</scope>
    <source>
        <strain>C57BL/6J</strain>
    </source>
</reference>
<reference key="3">
    <citation type="journal article" date="2004" name="Genome Res.">
        <title>The status, quality, and expansion of the NIH full-length cDNA project: the Mammalian Gene Collection (MGC).</title>
        <authorList>
            <consortium name="The MGC Project Team"/>
        </authorList>
    </citation>
    <scope>NUCLEOTIDE SEQUENCE [LARGE SCALE MRNA] (ISOFORM 3)</scope>
    <source>
        <strain>Czech II</strain>
    </source>
</reference>
<organism>
    <name type="scientific">Mus musculus</name>
    <name type="common">Mouse</name>
    <dbReference type="NCBI Taxonomy" id="10090"/>
    <lineage>
        <taxon>Eukaryota</taxon>
        <taxon>Metazoa</taxon>
        <taxon>Chordata</taxon>
        <taxon>Craniata</taxon>
        <taxon>Vertebrata</taxon>
        <taxon>Euteleostomi</taxon>
        <taxon>Mammalia</taxon>
        <taxon>Eutheria</taxon>
        <taxon>Euarchontoglires</taxon>
        <taxon>Glires</taxon>
        <taxon>Rodentia</taxon>
        <taxon>Myomorpha</taxon>
        <taxon>Muroidea</taxon>
        <taxon>Muridae</taxon>
        <taxon>Murinae</taxon>
        <taxon>Mus</taxon>
        <taxon>Mus</taxon>
    </lineage>
</organism>
<protein>
    <recommendedName>
        <fullName evidence="5">Rap1 GTPase-GDP dissociation stimulator 1</fullName>
    </recommendedName>
</protein>
<dbReference type="EMBL" id="AK160989">
    <property type="protein sequence ID" value="BAE36135.1"/>
    <property type="molecule type" value="mRNA"/>
</dbReference>
<dbReference type="EMBL" id="AK164159">
    <property type="protein sequence ID" value="BAE37656.1"/>
    <property type="molecule type" value="mRNA"/>
</dbReference>
<dbReference type="EMBL" id="AK166315">
    <property type="protein sequence ID" value="BAE38698.1"/>
    <property type="molecule type" value="mRNA"/>
</dbReference>
<dbReference type="EMBL" id="AK172052">
    <property type="protein sequence ID" value="BAE42801.1"/>
    <property type="molecule type" value="mRNA"/>
</dbReference>
<dbReference type="EMBL" id="AC110574">
    <property type="status" value="NOT_ANNOTATED_CDS"/>
    <property type="molecule type" value="Genomic_DNA"/>
</dbReference>
<dbReference type="EMBL" id="AC113307">
    <property type="status" value="NOT_ANNOTATED_CDS"/>
    <property type="molecule type" value="Genomic_DNA"/>
</dbReference>
<dbReference type="EMBL" id="AC119881">
    <property type="status" value="NOT_ANNOTATED_CDS"/>
    <property type="molecule type" value="Genomic_DNA"/>
</dbReference>
<dbReference type="EMBL" id="BC011279">
    <property type="protein sequence ID" value="AAH11279.1"/>
    <property type="molecule type" value="mRNA"/>
</dbReference>
<dbReference type="CCDS" id="CCDS51082.1">
    <molecule id="E9Q912-3"/>
</dbReference>
<dbReference type="CCDS" id="CCDS51083.1">
    <molecule id="E9Q912-1"/>
</dbReference>
<dbReference type="CCDS" id="CCDS80033.1">
    <molecule id="E9Q912-2"/>
</dbReference>
<dbReference type="RefSeq" id="NP_001035780.1">
    <molecule id="E9Q912-1"/>
    <property type="nucleotide sequence ID" value="NM_001040690.3"/>
</dbReference>
<dbReference type="RefSeq" id="NP_001273688.1">
    <molecule id="E9Q912-2"/>
    <property type="nucleotide sequence ID" value="NM_001286759.2"/>
</dbReference>
<dbReference type="RefSeq" id="NP_663519.2">
    <molecule id="E9Q912-3"/>
    <property type="nucleotide sequence ID" value="NM_145544.4"/>
</dbReference>
<dbReference type="SMR" id="E9Q912"/>
<dbReference type="FunCoup" id="E9Q912">
    <property type="interactions" value="4145"/>
</dbReference>
<dbReference type="STRING" id="10090.ENSMUSP00000096173"/>
<dbReference type="GlyGen" id="E9Q912">
    <property type="glycosylation" value="3 sites, 3 N-linked glycans (3 sites)"/>
</dbReference>
<dbReference type="iPTMnet" id="E9Q912"/>
<dbReference type="PhosphoSitePlus" id="E9Q912"/>
<dbReference type="SwissPalm" id="E9Q912"/>
<dbReference type="jPOST" id="E9Q912"/>
<dbReference type="PaxDb" id="10090-ENSMUSP00000096173"/>
<dbReference type="PeptideAtlas" id="E9Q912"/>
<dbReference type="ProteomicsDB" id="342782"/>
<dbReference type="ProteomicsDB" id="349181"/>
<dbReference type="ProteomicsDB" id="363855"/>
<dbReference type="Antibodypedia" id="6907">
    <property type="antibodies" value="146 antibodies from 30 providers"/>
</dbReference>
<dbReference type="DNASU" id="229877"/>
<dbReference type="Ensembl" id="ENSMUST00000029796.11">
    <molecule id="E9Q912-3"/>
    <property type="protein sequence ID" value="ENSMUSP00000029796.7"/>
    <property type="gene ID" value="ENSMUSG00000028149.13"/>
</dbReference>
<dbReference type="Ensembl" id="ENSMUST00000098574.9">
    <molecule id="E9Q912-1"/>
    <property type="protein sequence ID" value="ENSMUSP00000096173.3"/>
    <property type="gene ID" value="ENSMUSG00000028149.13"/>
</dbReference>
<dbReference type="Ensembl" id="ENSMUST00000196280.5">
    <molecule id="E9Q912-2"/>
    <property type="protein sequence ID" value="ENSMUSP00000143181.2"/>
    <property type="gene ID" value="ENSMUSG00000028149.13"/>
</dbReference>
<dbReference type="GeneID" id="229877"/>
<dbReference type="KEGG" id="mmu:229877"/>
<dbReference type="UCSC" id="uc008rnr.2">
    <molecule id="E9Q912-1"/>
    <property type="organism name" value="mouse"/>
</dbReference>
<dbReference type="UCSC" id="uc008rnt.2">
    <property type="organism name" value="mouse"/>
</dbReference>
<dbReference type="AGR" id="MGI:2385189"/>
<dbReference type="CTD" id="5910"/>
<dbReference type="MGI" id="MGI:2385189">
    <property type="gene designation" value="Rap1gds1"/>
</dbReference>
<dbReference type="VEuPathDB" id="HostDB:ENSMUSG00000028149"/>
<dbReference type="eggNOG" id="KOG4500">
    <property type="taxonomic scope" value="Eukaryota"/>
</dbReference>
<dbReference type="GeneTree" id="ENSGT00390000014293"/>
<dbReference type="HOGENOM" id="CLU_021124_1_0_1"/>
<dbReference type="InParanoid" id="E9Q912"/>
<dbReference type="OMA" id="NGTEHQM"/>
<dbReference type="OrthoDB" id="26149at2759"/>
<dbReference type="PhylomeDB" id="E9Q912"/>
<dbReference type="TreeFam" id="TF323666"/>
<dbReference type="BioGRID-ORCS" id="229877">
    <property type="hits" value="8 hits in 80 CRISPR screens"/>
</dbReference>
<dbReference type="CD-CODE" id="CE726F99">
    <property type="entry name" value="Postsynaptic density"/>
</dbReference>
<dbReference type="ChiTaRS" id="Rap1gds1">
    <property type="organism name" value="mouse"/>
</dbReference>
<dbReference type="PRO" id="PR:E9Q912"/>
<dbReference type="Proteomes" id="UP000000589">
    <property type="component" value="Chromosome 3"/>
</dbReference>
<dbReference type="RNAct" id="E9Q912">
    <property type="molecule type" value="protein"/>
</dbReference>
<dbReference type="Bgee" id="ENSMUSG00000028149">
    <property type="expression patterns" value="Expressed in medial dorsal nucleus of thalamus and 275 other cell types or tissues"/>
</dbReference>
<dbReference type="ExpressionAtlas" id="E9Q912">
    <property type="expression patterns" value="baseline and differential"/>
</dbReference>
<dbReference type="GO" id="GO:0005829">
    <property type="term" value="C:cytosol"/>
    <property type="evidence" value="ECO:0007669"/>
    <property type="project" value="UniProtKB-SubCell"/>
</dbReference>
<dbReference type="GO" id="GO:0005783">
    <property type="term" value="C:endoplasmic reticulum"/>
    <property type="evidence" value="ECO:0007669"/>
    <property type="project" value="UniProtKB-SubCell"/>
</dbReference>
<dbReference type="GO" id="GO:0005615">
    <property type="term" value="C:extracellular space"/>
    <property type="evidence" value="ECO:0000314"/>
    <property type="project" value="MGI"/>
</dbReference>
<dbReference type="GO" id="GO:0005739">
    <property type="term" value="C:mitochondrion"/>
    <property type="evidence" value="ECO:0007669"/>
    <property type="project" value="UniProtKB-SubCell"/>
</dbReference>
<dbReference type="GO" id="GO:0005634">
    <property type="term" value="C:nucleus"/>
    <property type="evidence" value="ECO:0000250"/>
    <property type="project" value="UniProtKB"/>
</dbReference>
<dbReference type="GO" id="GO:0030695">
    <property type="term" value="F:GTPase regulator activity"/>
    <property type="evidence" value="ECO:0000314"/>
    <property type="project" value="MGI"/>
</dbReference>
<dbReference type="GO" id="GO:0005085">
    <property type="term" value="F:guanyl-nucleotide exchange factor activity"/>
    <property type="evidence" value="ECO:0000250"/>
    <property type="project" value="UniProtKB"/>
</dbReference>
<dbReference type="GO" id="GO:0086098">
    <property type="term" value="P:angiotensin-activated signaling pathway involved in heart process"/>
    <property type="evidence" value="ECO:0000315"/>
    <property type="project" value="MGI"/>
</dbReference>
<dbReference type="GO" id="GO:0080120">
    <property type="term" value="P:CAAX-box protein maturation"/>
    <property type="evidence" value="ECO:0007669"/>
    <property type="project" value="Ensembl"/>
</dbReference>
<dbReference type="GO" id="GO:0003300">
    <property type="term" value="P:cardiac muscle hypertrophy"/>
    <property type="evidence" value="ECO:0000315"/>
    <property type="project" value="MGI"/>
</dbReference>
<dbReference type="GO" id="GO:0031034">
    <property type="term" value="P:myosin filament assembly"/>
    <property type="evidence" value="ECO:0007669"/>
    <property type="project" value="Ensembl"/>
</dbReference>
<dbReference type="GO" id="GO:0032471">
    <property type="term" value="P:negative regulation of endoplasmic reticulum calcium ion concentration"/>
    <property type="evidence" value="ECO:0007669"/>
    <property type="project" value="Ensembl"/>
</dbReference>
<dbReference type="GO" id="GO:0051561">
    <property type="term" value="P:positive regulation of mitochondrial calcium ion concentration"/>
    <property type="evidence" value="ECO:0007669"/>
    <property type="project" value="Ensembl"/>
</dbReference>
<dbReference type="GO" id="GO:0034504">
    <property type="term" value="P:protein localization to nucleus"/>
    <property type="evidence" value="ECO:0000250"/>
    <property type="project" value="UniProtKB"/>
</dbReference>
<dbReference type="GO" id="GO:0070376">
    <property type="term" value="P:regulation of ERK5 cascade"/>
    <property type="evidence" value="ECO:0000315"/>
    <property type="project" value="MGI"/>
</dbReference>
<dbReference type="GO" id="GO:1904464">
    <property type="term" value="P:regulation of matrix metallopeptidase secretion"/>
    <property type="evidence" value="ECO:0000315"/>
    <property type="project" value="MGI"/>
</dbReference>
<dbReference type="GO" id="GO:0010821">
    <property type="term" value="P:regulation of mitochondrion organization"/>
    <property type="evidence" value="ECO:0007669"/>
    <property type="project" value="Ensembl"/>
</dbReference>
<dbReference type="GO" id="GO:0014829">
    <property type="term" value="P:vascular associated smooth muscle contraction"/>
    <property type="evidence" value="ECO:0007669"/>
    <property type="project" value="Ensembl"/>
</dbReference>
<dbReference type="FunFam" id="1.25.10.10:FF:000127">
    <property type="entry name" value="rap1 GTPase-GDP dissociation stimulator 1 isoform X1"/>
    <property type="match status" value="1"/>
</dbReference>
<dbReference type="FunFam" id="1.25.10.10:FF:000141">
    <property type="entry name" value="rap1 GTPase-GDP dissociation stimulator 1 isoform X1"/>
    <property type="match status" value="1"/>
</dbReference>
<dbReference type="FunFam" id="1.25.10.10:FF:000144">
    <property type="entry name" value="rap1 GTPase-GDP dissociation stimulator 1 isoform X1"/>
    <property type="match status" value="1"/>
</dbReference>
<dbReference type="Gene3D" id="1.25.10.10">
    <property type="entry name" value="Leucine-rich Repeat Variant"/>
    <property type="match status" value="3"/>
</dbReference>
<dbReference type="InterPro" id="IPR011989">
    <property type="entry name" value="ARM-like"/>
</dbReference>
<dbReference type="InterPro" id="IPR016024">
    <property type="entry name" value="ARM-type_fold"/>
</dbReference>
<dbReference type="InterPro" id="IPR000225">
    <property type="entry name" value="Armadillo"/>
</dbReference>
<dbReference type="InterPro" id="IPR040144">
    <property type="entry name" value="RAP1GDS1"/>
</dbReference>
<dbReference type="PANTHER" id="PTHR10957">
    <property type="entry name" value="RAP1 GTPASE-GDP DISSOCIATION STIMULATOR 1"/>
    <property type="match status" value="1"/>
</dbReference>
<dbReference type="Pfam" id="PF00514">
    <property type="entry name" value="Arm"/>
    <property type="match status" value="3"/>
</dbReference>
<dbReference type="SMART" id="SM00185">
    <property type="entry name" value="ARM"/>
    <property type="match status" value="6"/>
</dbReference>
<dbReference type="SUPFAM" id="SSF48371">
    <property type="entry name" value="ARM repeat"/>
    <property type="match status" value="2"/>
</dbReference>
<dbReference type="PROSITE" id="PS50176">
    <property type="entry name" value="ARM_REPEAT"/>
    <property type="match status" value="2"/>
</dbReference>